<dbReference type="EC" id="4.1.1.39" evidence="1"/>
<dbReference type="EMBL" id="CP000489">
    <property type="protein sequence ID" value="ABL69796.1"/>
    <property type="molecule type" value="Genomic_DNA"/>
</dbReference>
<dbReference type="RefSeq" id="WP_011747994.1">
    <property type="nucleotide sequence ID" value="NC_008686.1"/>
</dbReference>
<dbReference type="SMR" id="A1B2Q2"/>
<dbReference type="STRING" id="318586.Pden_1699"/>
<dbReference type="EnsemblBacteria" id="ABL69796">
    <property type="protein sequence ID" value="ABL69796"/>
    <property type="gene ID" value="Pden_1699"/>
</dbReference>
<dbReference type="GeneID" id="93450091"/>
<dbReference type="KEGG" id="pde:Pden_1699"/>
<dbReference type="eggNOG" id="COG1850">
    <property type="taxonomic scope" value="Bacteria"/>
</dbReference>
<dbReference type="HOGENOM" id="CLU_031450_2_0_5"/>
<dbReference type="OrthoDB" id="9764279at2"/>
<dbReference type="Proteomes" id="UP000000361">
    <property type="component" value="Chromosome 1"/>
</dbReference>
<dbReference type="GO" id="GO:0000287">
    <property type="term" value="F:magnesium ion binding"/>
    <property type="evidence" value="ECO:0007669"/>
    <property type="project" value="UniProtKB-UniRule"/>
</dbReference>
<dbReference type="GO" id="GO:0004497">
    <property type="term" value="F:monooxygenase activity"/>
    <property type="evidence" value="ECO:0007669"/>
    <property type="project" value="UniProtKB-KW"/>
</dbReference>
<dbReference type="GO" id="GO:0016984">
    <property type="term" value="F:ribulose-bisphosphate carboxylase activity"/>
    <property type="evidence" value="ECO:0007669"/>
    <property type="project" value="UniProtKB-UniRule"/>
</dbReference>
<dbReference type="GO" id="GO:0019253">
    <property type="term" value="P:reductive pentose-phosphate cycle"/>
    <property type="evidence" value="ECO:0007669"/>
    <property type="project" value="UniProtKB-UniRule"/>
</dbReference>
<dbReference type="CDD" id="cd08212">
    <property type="entry name" value="RuBisCO_large_I"/>
    <property type="match status" value="1"/>
</dbReference>
<dbReference type="Gene3D" id="3.20.20.110">
    <property type="entry name" value="Ribulose bisphosphate carboxylase, large subunit, C-terminal domain"/>
    <property type="match status" value="1"/>
</dbReference>
<dbReference type="Gene3D" id="3.30.70.150">
    <property type="entry name" value="RuBisCO large subunit, N-terminal domain"/>
    <property type="match status" value="1"/>
</dbReference>
<dbReference type="HAMAP" id="MF_01338">
    <property type="entry name" value="RuBisCO_L_type1"/>
    <property type="match status" value="1"/>
</dbReference>
<dbReference type="InterPro" id="IPR033966">
    <property type="entry name" value="RuBisCO"/>
</dbReference>
<dbReference type="InterPro" id="IPR020878">
    <property type="entry name" value="RuBisCo_large_chain_AS"/>
</dbReference>
<dbReference type="InterPro" id="IPR000685">
    <property type="entry name" value="RuBisCO_lsu_C"/>
</dbReference>
<dbReference type="InterPro" id="IPR036376">
    <property type="entry name" value="RuBisCO_lsu_C_sf"/>
</dbReference>
<dbReference type="InterPro" id="IPR017443">
    <property type="entry name" value="RuBisCO_lsu_fd_N"/>
</dbReference>
<dbReference type="InterPro" id="IPR036422">
    <property type="entry name" value="RuBisCO_lsu_N_sf"/>
</dbReference>
<dbReference type="InterPro" id="IPR020888">
    <property type="entry name" value="RuBisCO_lsuI"/>
</dbReference>
<dbReference type="NCBIfam" id="NF003252">
    <property type="entry name" value="PRK04208.1"/>
    <property type="match status" value="1"/>
</dbReference>
<dbReference type="PANTHER" id="PTHR42704">
    <property type="entry name" value="RIBULOSE BISPHOSPHATE CARBOXYLASE"/>
    <property type="match status" value="1"/>
</dbReference>
<dbReference type="PANTHER" id="PTHR42704:SF17">
    <property type="entry name" value="RIBULOSE BISPHOSPHATE CARBOXYLASE LARGE CHAIN"/>
    <property type="match status" value="1"/>
</dbReference>
<dbReference type="Pfam" id="PF00016">
    <property type="entry name" value="RuBisCO_large"/>
    <property type="match status" value="1"/>
</dbReference>
<dbReference type="Pfam" id="PF02788">
    <property type="entry name" value="RuBisCO_large_N"/>
    <property type="match status" value="1"/>
</dbReference>
<dbReference type="SFLD" id="SFLDG01052">
    <property type="entry name" value="RuBisCO"/>
    <property type="match status" value="1"/>
</dbReference>
<dbReference type="SFLD" id="SFLDS00014">
    <property type="entry name" value="RuBisCO"/>
    <property type="match status" value="1"/>
</dbReference>
<dbReference type="SFLD" id="SFLDG00301">
    <property type="entry name" value="RuBisCO-like_proteins"/>
    <property type="match status" value="1"/>
</dbReference>
<dbReference type="SUPFAM" id="SSF51649">
    <property type="entry name" value="RuBisCo, C-terminal domain"/>
    <property type="match status" value="1"/>
</dbReference>
<dbReference type="SUPFAM" id="SSF54966">
    <property type="entry name" value="RuBisCO, large subunit, small (N-terminal) domain"/>
    <property type="match status" value="1"/>
</dbReference>
<dbReference type="PROSITE" id="PS00157">
    <property type="entry name" value="RUBISCO_LARGE"/>
    <property type="match status" value="1"/>
</dbReference>
<gene>
    <name evidence="1" type="primary">cbbL</name>
    <name type="ordered locus">Pden_1699</name>
</gene>
<feature type="chain" id="PRO_0000299967" description="Ribulose bisphosphate carboxylase large chain">
    <location>
        <begin position="1"/>
        <end position="487"/>
    </location>
</feature>
<feature type="active site" description="Proton acceptor" evidence="1">
    <location>
        <position position="179"/>
    </location>
</feature>
<feature type="active site" description="Proton acceptor" evidence="1">
    <location>
        <position position="297"/>
    </location>
</feature>
<feature type="binding site" description="in homodimeric partner" evidence="1">
    <location>
        <position position="127"/>
    </location>
    <ligand>
        <name>substrate</name>
    </ligand>
</feature>
<feature type="binding site" evidence="1">
    <location>
        <position position="177"/>
    </location>
    <ligand>
        <name>substrate</name>
    </ligand>
</feature>
<feature type="binding site" evidence="1">
    <location>
        <position position="181"/>
    </location>
    <ligand>
        <name>substrate</name>
    </ligand>
</feature>
<feature type="binding site" description="via carbamate group" evidence="1">
    <location>
        <position position="205"/>
    </location>
    <ligand>
        <name>Mg(2+)</name>
        <dbReference type="ChEBI" id="CHEBI:18420"/>
    </ligand>
</feature>
<feature type="binding site" evidence="1">
    <location>
        <position position="207"/>
    </location>
    <ligand>
        <name>Mg(2+)</name>
        <dbReference type="ChEBI" id="CHEBI:18420"/>
    </ligand>
</feature>
<feature type="binding site" evidence="1">
    <location>
        <position position="208"/>
    </location>
    <ligand>
        <name>Mg(2+)</name>
        <dbReference type="ChEBI" id="CHEBI:18420"/>
    </ligand>
</feature>
<feature type="binding site" evidence="1">
    <location>
        <position position="298"/>
    </location>
    <ligand>
        <name>substrate</name>
    </ligand>
</feature>
<feature type="binding site" evidence="1">
    <location>
        <position position="330"/>
    </location>
    <ligand>
        <name>substrate</name>
    </ligand>
</feature>
<feature type="binding site" evidence="1">
    <location>
        <position position="382"/>
    </location>
    <ligand>
        <name>substrate</name>
    </ligand>
</feature>
<feature type="site" description="Transition state stabilizer" evidence="1">
    <location>
        <position position="337"/>
    </location>
</feature>
<feature type="modified residue" description="N6-carboxylysine" evidence="1">
    <location>
        <position position="205"/>
    </location>
</feature>
<proteinExistence type="inferred from homology"/>
<accession>A1B2Q2</accession>
<keyword id="KW-0113">Calvin cycle</keyword>
<keyword id="KW-0120">Carbon dioxide fixation</keyword>
<keyword id="KW-0456">Lyase</keyword>
<keyword id="KW-0460">Magnesium</keyword>
<keyword id="KW-0479">Metal-binding</keyword>
<keyword id="KW-0503">Monooxygenase</keyword>
<keyword id="KW-0560">Oxidoreductase</keyword>
<keyword id="KW-1185">Reference proteome</keyword>
<name>RBL_PARDP</name>
<protein>
    <recommendedName>
        <fullName evidence="1">Ribulose bisphosphate carboxylase large chain</fullName>
        <shortName evidence="1">RuBisCO large subunit</shortName>
        <ecNumber evidence="1">4.1.1.39</ecNumber>
    </recommendedName>
</protein>
<sequence length="487" mass="53971">MNEMSKSEITDKKKRYAAGVLKYAQMGYWDGDYQPKDTDILALFRITPQDGVDPIEAAAAVAGESSTATWTVVWTDRLTACDQYRAKAYKVEPVPGQEGQYFCYVAYDLILFEEGSIANVTASIIGNVFSFKPLLAARLEDMRFPVAYMKTFAGPPTGIVVERERLDKFGRPLLGATTKPKLGLSGKNYGRVVYEGLKGGLDFMKDDENINSQPFMHWRDRFLYCMEAVNKATAVTGEVKGHYLNITAGTMEEMYRRAELAKELGSVIVMVDLIVGWTAIQSISNWCRQNDMILHMHRAGHGTYTRQKNHGISFRVIAKWLRMAGVDHLHCGTAVGKLEGDPLTVQGYYNTCREMVNEVDLPRGIFFEQDWGNLKKVMPVASGGIHAGQMHQLLDLFGDDVVLQFGGGTIGHPMGIQAGATANRVALEAMVLARNEGVDLKTEGPEVLRRAAKWCKPLEAALDVWGNITFNYTSTDTSDFVPTASVS</sequence>
<evidence type="ECO:0000255" key="1">
    <source>
        <dbReference type="HAMAP-Rule" id="MF_01338"/>
    </source>
</evidence>
<comment type="function">
    <text evidence="1">RuBisCO catalyzes two reactions: the carboxylation of D-ribulose 1,5-bisphosphate, the primary event in carbon dioxide fixation, as well as the oxidative fragmentation of the pentose substrate. Both reactions occur simultaneously and in competition at the same active site.</text>
</comment>
<comment type="catalytic activity">
    <reaction evidence="1">
        <text>2 (2R)-3-phosphoglycerate + 2 H(+) = D-ribulose 1,5-bisphosphate + CO2 + H2O</text>
        <dbReference type="Rhea" id="RHEA:23124"/>
        <dbReference type="ChEBI" id="CHEBI:15377"/>
        <dbReference type="ChEBI" id="CHEBI:15378"/>
        <dbReference type="ChEBI" id="CHEBI:16526"/>
        <dbReference type="ChEBI" id="CHEBI:57870"/>
        <dbReference type="ChEBI" id="CHEBI:58272"/>
        <dbReference type="EC" id="4.1.1.39"/>
    </reaction>
</comment>
<comment type="catalytic activity">
    <reaction evidence="1">
        <text>D-ribulose 1,5-bisphosphate + O2 = 2-phosphoglycolate + (2R)-3-phosphoglycerate + 2 H(+)</text>
        <dbReference type="Rhea" id="RHEA:36631"/>
        <dbReference type="ChEBI" id="CHEBI:15378"/>
        <dbReference type="ChEBI" id="CHEBI:15379"/>
        <dbReference type="ChEBI" id="CHEBI:57870"/>
        <dbReference type="ChEBI" id="CHEBI:58033"/>
        <dbReference type="ChEBI" id="CHEBI:58272"/>
    </reaction>
</comment>
<comment type="cofactor">
    <cofactor evidence="1">
        <name>Mg(2+)</name>
        <dbReference type="ChEBI" id="CHEBI:18420"/>
    </cofactor>
    <text evidence="1">Binds 1 Mg(2+) ion per subunit.</text>
</comment>
<comment type="subunit">
    <text evidence="1">Heterohexadecamer of 8 large chains and 8 small chains.</text>
</comment>
<comment type="miscellaneous">
    <text evidence="1">The basic functional RuBisCO is composed of a large chain homodimer in a 'head-to-tail' conformation. In form I RuBisCO this homodimer is arranged in a barrel-like tetramer with the small subunits forming a tetrameric 'cap' on each end of the 'barrel'.</text>
</comment>
<comment type="similarity">
    <text evidence="1">Belongs to the RuBisCO large chain family. Type I subfamily.</text>
</comment>
<reference key="1">
    <citation type="submission" date="2006-12" db="EMBL/GenBank/DDBJ databases">
        <title>Complete sequence of chromosome 1 of Paracoccus denitrificans PD1222.</title>
        <authorList>
            <person name="Copeland A."/>
            <person name="Lucas S."/>
            <person name="Lapidus A."/>
            <person name="Barry K."/>
            <person name="Detter J.C."/>
            <person name="Glavina del Rio T."/>
            <person name="Hammon N."/>
            <person name="Israni S."/>
            <person name="Dalin E."/>
            <person name="Tice H."/>
            <person name="Pitluck S."/>
            <person name="Munk A.C."/>
            <person name="Brettin T."/>
            <person name="Bruce D."/>
            <person name="Han C."/>
            <person name="Tapia R."/>
            <person name="Gilna P."/>
            <person name="Schmutz J."/>
            <person name="Larimer F."/>
            <person name="Land M."/>
            <person name="Hauser L."/>
            <person name="Kyrpides N."/>
            <person name="Lykidis A."/>
            <person name="Spiro S."/>
            <person name="Richardson D.J."/>
            <person name="Moir J.W.B."/>
            <person name="Ferguson S.J."/>
            <person name="van Spanning R.J.M."/>
            <person name="Richardson P."/>
        </authorList>
    </citation>
    <scope>NUCLEOTIDE SEQUENCE [LARGE SCALE GENOMIC DNA]</scope>
    <source>
        <strain>Pd 1222</strain>
    </source>
</reference>
<organism>
    <name type="scientific">Paracoccus denitrificans (strain Pd 1222)</name>
    <dbReference type="NCBI Taxonomy" id="318586"/>
    <lineage>
        <taxon>Bacteria</taxon>
        <taxon>Pseudomonadati</taxon>
        <taxon>Pseudomonadota</taxon>
        <taxon>Alphaproteobacteria</taxon>
        <taxon>Rhodobacterales</taxon>
        <taxon>Paracoccaceae</taxon>
        <taxon>Paracoccus</taxon>
    </lineage>
</organism>